<proteinExistence type="inferred from homology"/>
<gene>
    <name evidence="1" type="primary">phnW1</name>
    <name type="ordered locus">Reut_B3718</name>
</gene>
<protein>
    <recommendedName>
        <fullName evidence="1">2-aminoethylphosphonate--pyruvate transaminase 1</fullName>
        <ecNumber evidence="1">2.6.1.37</ecNumber>
    </recommendedName>
    <alternativeName>
        <fullName evidence="1">2-aminoethylphosphonate aminotransferase 1</fullName>
    </alternativeName>
    <alternativeName>
        <fullName evidence="1">AEP transaminase 1</fullName>
        <shortName evidence="1">AEPT 1</shortName>
    </alternativeName>
</protein>
<dbReference type="EC" id="2.6.1.37" evidence="1"/>
<dbReference type="EMBL" id="CP000091">
    <property type="protein sequence ID" value="AAZ63076.1"/>
    <property type="molecule type" value="Genomic_DNA"/>
</dbReference>
<dbReference type="SMR" id="Q46UV8"/>
<dbReference type="STRING" id="264198.Reut_B3718"/>
<dbReference type="KEGG" id="reu:Reut_B3718"/>
<dbReference type="eggNOG" id="COG0075">
    <property type="taxonomic scope" value="Bacteria"/>
</dbReference>
<dbReference type="HOGENOM" id="CLU_027686_3_1_4"/>
<dbReference type="OrthoDB" id="9766472at2"/>
<dbReference type="GO" id="GO:0047304">
    <property type="term" value="F:2-aminoethylphosphonate-pyruvate transaminase activity"/>
    <property type="evidence" value="ECO:0007669"/>
    <property type="project" value="UniProtKB-UniRule"/>
</dbReference>
<dbReference type="GO" id="GO:0019700">
    <property type="term" value="P:organic phosphonate catabolic process"/>
    <property type="evidence" value="ECO:0007669"/>
    <property type="project" value="InterPro"/>
</dbReference>
<dbReference type="Gene3D" id="3.90.1150.10">
    <property type="entry name" value="Aspartate Aminotransferase, domain 1"/>
    <property type="match status" value="1"/>
</dbReference>
<dbReference type="Gene3D" id="3.40.640.10">
    <property type="entry name" value="Type I PLP-dependent aspartate aminotransferase-like (Major domain)"/>
    <property type="match status" value="1"/>
</dbReference>
<dbReference type="HAMAP" id="MF_01376">
    <property type="entry name" value="PhnW_aminotrans_5"/>
    <property type="match status" value="1"/>
</dbReference>
<dbReference type="InterPro" id="IPR000192">
    <property type="entry name" value="Aminotrans_V_dom"/>
</dbReference>
<dbReference type="InterPro" id="IPR012703">
    <property type="entry name" value="NH2EtPonate_pyrv_transaminase"/>
</dbReference>
<dbReference type="InterPro" id="IPR015424">
    <property type="entry name" value="PyrdxlP-dep_Trfase"/>
</dbReference>
<dbReference type="InterPro" id="IPR015421">
    <property type="entry name" value="PyrdxlP-dep_Trfase_major"/>
</dbReference>
<dbReference type="InterPro" id="IPR015422">
    <property type="entry name" value="PyrdxlP-dep_Trfase_small"/>
</dbReference>
<dbReference type="InterPro" id="IPR024169">
    <property type="entry name" value="SP_NH2Trfase/AEP_transaminase"/>
</dbReference>
<dbReference type="NCBIfam" id="TIGR03301">
    <property type="entry name" value="PhnW-AepZ"/>
    <property type="match status" value="1"/>
</dbReference>
<dbReference type="NCBIfam" id="NF010006">
    <property type="entry name" value="PRK13479.1"/>
    <property type="match status" value="1"/>
</dbReference>
<dbReference type="NCBIfam" id="TIGR02326">
    <property type="entry name" value="transamin_PhnW"/>
    <property type="match status" value="1"/>
</dbReference>
<dbReference type="PANTHER" id="PTHR42778">
    <property type="entry name" value="2-AMINOETHYLPHOSPHONATE--PYRUVATE TRANSAMINASE"/>
    <property type="match status" value="1"/>
</dbReference>
<dbReference type="PANTHER" id="PTHR42778:SF1">
    <property type="entry name" value="2-AMINOETHYLPHOSPHONATE--PYRUVATE TRANSAMINASE"/>
    <property type="match status" value="1"/>
</dbReference>
<dbReference type="Pfam" id="PF00266">
    <property type="entry name" value="Aminotran_5"/>
    <property type="match status" value="1"/>
</dbReference>
<dbReference type="PIRSF" id="PIRSF000524">
    <property type="entry name" value="SPT"/>
    <property type="match status" value="1"/>
</dbReference>
<dbReference type="SUPFAM" id="SSF53383">
    <property type="entry name" value="PLP-dependent transferases"/>
    <property type="match status" value="1"/>
</dbReference>
<evidence type="ECO:0000255" key="1">
    <source>
        <dbReference type="HAMAP-Rule" id="MF_01376"/>
    </source>
</evidence>
<evidence type="ECO:0000305" key="2"/>
<comment type="function">
    <text evidence="1">Involved in phosphonate degradation.</text>
</comment>
<comment type="catalytic activity">
    <reaction evidence="1">
        <text>(2-aminoethyl)phosphonate + pyruvate = phosphonoacetaldehyde + L-alanine</text>
        <dbReference type="Rhea" id="RHEA:17021"/>
        <dbReference type="ChEBI" id="CHEBI:15361"/>
        <dbReference type="ChEBI" id="CHEBI:57418"/>
        <dbReference type="ChEBI" id="CHEBI:57972"/>
        <dbReference type="ChEBI" id="CHEBI:58383"/>
        <dbReference type="EC" id="2.6.1.37"/>
    </reaction>
</comment>
<comment type="cofactor">
    <cofactor evidence="1">
        <name>pyridoxal 5'-phosphate</name>
        <dbReference type="ChEBI" id="CHEBI:597326"/>
    </cofactor>
</comment>
<comment type="subunit">
    <text evidence="1">Homodimer.</text>
</comment>
<comment type="similarity">
    <text evidence="1">Belongs to the class-V pyridoxal-phosphate-dependent aminotransferase family. PhnW subfamily.</text>
</comment>
<comment type="caution">
    <text evidence="2">The second enzyme involved in phosphonate degradation (PhnX, EC 3.11.1.1) is not found in this organism. The function of this enzyme is therefore uncertain.</text>
</comment>
<accession>Q46UV8</accession>
<sequence length="378" mass="41042">MIRGNDPILLTPGPLTTSLATKQAMLRDWGSWDAAFNAITGSLCEDLVRIVHGEGTHVCVPMQGSGTFSVEAAIANVVPRDGKVLVPQNGAYCQRILKICKVLGRAHVELPIPEDRPATAAAIEAALKKDPSITHVAQVHCETGAGVLNPLPEIAAVCARLGKGLIVDAMSSFGAIEIDARTMPFDALVAATGKCIEGVPGMGFVLVKKTVLEGSQGNSHSLALDLYDQYTYMQKTTQWRFTPPTHVVAAFRTALDQFLEEGGQPVRGERYRRNYETLVQGMAVLGFRPFLSPDVQAPIIVTFHAPADARYDFRTFYEKVRSRGYILYPGKLTQVETFRVGCIGAIDDNEMRNVVSAIGETLREMGISMQPEGRVRAA</sequence>
<organism>
    <name type="scientific">Cupriavidus pinatubonensis (strain JMP 134 / LMG 1197)</name>
    <name type="common">Cupriavidus necator (strain JMP 134)</name>
    <dbReference type="NCBI Taxonomy" id="264198"/>
    <lineage>
        <taxon>Bacteria</taxon>
        <taxon>Pseudomonadati</taxon>
        <taxon>Pseudomonadota</taxon>
        <taxon>Betaproteobacteria</taxon>
        <taxon>Burkholderiales</taxon>
        <taxon>Burkholderiaceae</taxon>
        <taxon>Cupriavidus</taxon>
    </lineage>
</organism>
<feature type="chain" id="PRO_0000286782" description="2-aminoethylphosphonate--pyruvate transaminase 1">
    <location>
        <begin position="1"/>
        <end position="378"/>
    </location>
</feature>
<feature type="modified residue" description="N6-(pyridoxal phosphate)lysine" evidence="1">
    <location>
        <position position="194"/>
    </location>
</feature>
<keyword id="KW-0032">Aminotransferase</keyword>
<keyword id="KW-0663">Pyridoxal phosphate</keyword>
<keyword id="KW-0670">Pyruvate</keyword>
<keyword id="KW-0808">Transferase</keyword>
<reference key="1">
    <citation type="journal article" date="2010" name="PLoS ONE">
        <title>The complete multipartite genome sequence of Cupriavidus necator JMP134, a versatile pollutant degrader.</title>
        <authorList>
            <person name="Lykidis A."/>
            <person name="Perez-Pantoja D."/>
            <person name="Ledger T."/>
            <person name="Mavromatis K."/>
            <person name="Anderson I.J."/>
            <person name="Ivanova N.N."/>
            <person name="Hooper S.D."/>
            <person name="Lapidus A."/>
            <person name="Lucas S."/>
            <person name="Gonzalez B."/>
            <person name="Kyrpides N.C."/>
        </authorList>
    </citation>
    <scope>NUCLEOTIDE SEQUENCE [LARGE SCALE GENOMIC DNA]</scope>
    <source>
        <strain>JMP134 / LMG 1197</strain>
    </source>
</reference>
<name>PHNW1_CUPPJ</name>